<name>RS10_ALLAM</name>
<evidence type="ECO:0000255" key="1">
    <source>
        <dbReference type="HAMAP-Rule" id="MF_00508"/>
    </source>
</evidence>
<evidence type="ECO:0000305" key="2"/>
<keyword id="KW-1185">Reference proteome</keyword>
<keyword id="KW-0687">Ribonucleoprotein</keyword>
<keyword id="KW-0689">Ribosomal protein</keyword>
<organism>
    <name type="scientific">Allorhizobium ampelinum (strain ATCC BAA-846 / DSM 112012 / S4)</name>
    <name type="common">Agrobacterium vitis (strain S4)</name>
    <dbReference type="NCBI Taxonomy" id="311402"/>
    <lineage>
        <taxon>Bacteria</taxon>
        <taxon>Pseudomonadati</taxon>
        <taxon>Pseudomonadota</taxon>
        <taxon>Alphaproteobacteria</taxon>
        <taxon>Hyphomicrobiales</taxon>
        <taxon>Rhizobiaceae</taxon>
        <taxon>Rhizobium/Agrobacterium group</taxon>
        <taxon>Allorhizobium</taxon>
        <taxon>Allorhizobium ampelinum</taxon>
    </lineage>
</organism>
<accession>B9JVN6</accession>
<reference key="1">
    <citation type="journal article" date="2009" name="J. Bacteriol.">
        <title>Genome sequences of three Agrobacterium biovars help elucidate the evolution of multichromosome genomes in bacteria.</title>
        <authorList>
            <person name="Slater S.C."/>
            <person name="Goldman B.S."/>
            <person name="Goodner B."/>
            <person name="Setubal J.C."/>
            <person name="Farrand S.K."/>
            <person name="Nester E.W."/>
            <person name="Burr T.J."/>
            <person name="Banta L."/>
            <person name="Dickerman A.W."/>
            <person name="Paulsen I."/>
            <person name="Otten L."/>
            <person name="Suen G."/>
            <person name="Welch R."/>
            <person name="Almeida N.F."/>
            <person name="Arnold F."/>
            <person name="Burton O.T."/>
            <person name="Du Z."/>
            <person name="Ewing A."/>
            <person name="Godsy E."/>
            <person name="Heisel S."/>
            <person name="Houmiel K.L."/>
            <person name="Jhaveri J."/>
            <person name="Lu J."/>
            <person name="Miller N.M."/>
            <person name="Norton S."/>
            <person name="Chen Q."/>
            <person name="Phoolcharoen W."/>
            <person name="Ohlin V."/>
            <person name="Ondrusek D."/>
            <person name="Pride N."/>
            <person name="Stricklin S.L."/>
            <person name="Sun J."/>
            <person name="Wheeler C."/>
            <person name="Wilson L."/>
            <person name="Zhu H."/>
            <person name="Wood D.W."/>
        </authorList>
    </citation>
    <scope>NUCLEOTIDE SEQUENCE [LARGE SCALE GENOMIC DNA]</scope>
    <source>
        <strain>ATCC BAA-846 / DSM 112012 / S4</strain>
    </source>
</reference>
<sequence length="102" mass="11542">MNGQNIRIRLKAFDHRVLDASTREIVSTAKRTGASVRGPVPLPTRIEKFTVNRSPHVDKKSREQFEMRTHKRLLDIVDPTPQTVDALMKLDLAAGVDVEIKL</sequence>
<comment type="function">
    <text evidence="1">Involved in the binding of tRNA to the ribosomes.</text>
</comment>
<comment type="subunit">
    <text evidence="1">Part of the 30S ribosomal subunit.</text>
</comment>
<comment type="similarity">
    <text evidence="1">Belongs to the universal ribosomal protein uS10 family.</text>
</comment>
<protein>
    <recommendedName>
        <fullName evidence="1">Small ribosomal subunit protein uS10</fullName>
    </recommendedName>
    <alternativeName>
        <fullName evidence="2">30S ribosomal protein S10</fullName>
    </alternativeName>
</protein>
<gene>
    <name evidence="1" type="primary">rpsJ</name>
    <name type="ordered locus">Avi_1839</name>
</gene>
<proteinExistence type="inferred from homology"/>
<dbReference type="EMBL" id="CP000633">
    <property type="protein sequence ID" value="ACM36316.1"/>
    <property type="molecule type" value="Genomic_DNA"/>
</dbReference>
<dbReference type="RefSeq" id="WP_006728688.1">
    <property type="nucleotide sequence ID" value="NC_011989.1"/>
</dbReference>
<dbReference type="SMR" id="B9JVN6"/>
<dbReference type="STRING" id="311402.Avi_1839"/>
<dbReference type="GeneID" id="60682402"/>
<dbReference type="KEGG" id="avi:Avi_1839"/>
<dbReference type="eggNOG" id="COG0051">
    <property type="taxonomic scope" value="Bacteria"/>
</dbReference>
<dbReference type="HOGENOM" id="CLU_122625_1_3_5"/>
<dbReference type="Proteomes" id="UP000001596">
    <property type="component" value="Chromosome 1"/>
</dbReference>
<dbReference type="GO" id="GO:1990904">
    <property type="term" value="C:ribonucleoprotein complex"/>
    <property type="evidence" value="ECO:0007669"/>
    <property type="project" value="UniProtKB-KW"/>
</dbReference>
<dbReference type="GO" id="GO:0005840">
    <property type="term" value="C:ribosome"/>
    <property type="evidence" value="ECO:0007669"/>
    <property type="project" value="UniProtKB-KW"/>
</dbReference>
<dbReference type="GO" id="GO:0003735">
    <property type="term" value="F:structural constituent of ribosome"/>
    <property type="evidence" value="ECO:0007669"/>
    <property type="project" value="InterPro"/>
</dbReference>
<dbReference type="GO" id="GO:0000049">
    <property type="term" value="F:tRNA binding"/>
    <property type="evidence" value="ECO:0007669"/>
    <property type="project" value="UniProtKB-UniRule"/>
</dbReference>
<dbReference type="GO" id="GO:0006412">
    <property type="term" value="P:translation"/>
    <property type="evidence" value="ECO:0007669"/>
    <property type="project" value="UniProtKB-UniRule"/>
</dbReference>
<dbReference type="FunFam" id="3.30.70.600:FF:000001">
    <property type="entry name" value="30S ribosomal protein S10"/>
    <property type="match status" value="1"/>
</dbReference>
<dbReference type="Gene3D" id="3.30.70.600">
    <property type="entry name" value="Ribosomal protein S10 domain"/>
    <property type="match status" value="1"/>
</dbReference>
<dbReference type="HAMAP" id="MF_00508">
    <property type="entry name" value="Ribosomal_uS10"/>
    <property type="match status" value="1"/>
</dbReference>
<dbReference type="InterPro" id="IPR001848">
    <property type="entry name" value="Ribosomal_uS10"/>
</dbReference>
<dbReference type="InterPro" id="IPR018268">
    <property type="entry name" value="Ribosomal_uS10_CS"/>
</dbReference>
<dbReference type="InterPro" id="IPR027486">
    <property type="entry name" value="Ribosomal_uS10_dom"/>
</dbReference>
<dbReference type="InterPro" id="IPR036838">
    <property type="entry name" value="Ribosomal_uS10_dom_sf"/>
</dbReference>
<dbReference type="NCBIfam" id="NF001861">
    <property type="entry name" value="PRK00596.1"/>
    <property type="match status" value="1"/>
</dbReference>
<dbReference type="NCBIfam" id="TIGR01049">
    <property type="entry name" value="rpsJ_bact"/>
    <property type="match status" value="1"/>
</dbReference>
<dbReference type="PANTHER" id="PTHR11700">
    <property type="entry name" value="30S RIBOSOMAL PROTEIN S10 FAMILY MEMBER"/>
    <property type="match status" value="1"/>
</dbReference>
<dbReference type="Pfam" id="PF00338">
    <property type="entry name" value="Ribosomal_S10"/>
    <property type="match status" value="1"/>
</dbReference>
<dbReference type="PRINTS" id="PR00971">
    <property type="entry name" value="RIBOSOMALS10"/>
</dbReference>
<dbReference type="SMART" id="SM01403">
    <property type="entry name" value="Ribosomal_S10"/>
    <property type="match status" value="1"/>
</dbReference>
<dbReference type="SUPFAM" id="SSF54999">
    <property type="entry name" value="Ribosomal protein S10"/>
    <property type="match status" value="1"/>
</dbReference>
<dbReference type="PROSITE" id="PS00361">
    <property type="entry name" value="RIBOSOMAL_S10"/>
    <property type="match status" value="1"/>
</dbReference>
<feature type="chain" id="PRO_1000196277" description="Small ribosomal subunit protein uS10">
    <location>
        <begin position="1"/>
        <end position="102"/>
    </location>
</feature>